<name>VDAC4_ARATH</name>
<gene>
    <name type="primary">VDAC4</name>
    <name type="ordered locus">At5g57490</name>
    <name type="ORF">MUA2.6</name>
</gene>
<proteinExistence type="evidence at protein level"/>
<reference key="1">
    <citation type="journal article" date="1998" name="DNA Res.">
        <title>Structural analysis of Arabidopsis thaliana chromosome 5. V. Sequence features of the regions of 1,381,565 bp covered by twenty one physically assigned P1 and TAC clones.</title>
        <authorList>
            <person name="Kaneko T."/>
            <person name="Kotani H."/>
            <person name="Nakamura Y."/>
            <person name="Sato S."/>
            <person name="Asamizu E."/>
            <person name="Miyajima N."/>
            <person name="Tabata S."/>
        </authorList>
    </citation>
    <scope>NUCLEOTIDE SEQUENCE [LARGE SCALE GENOMIC DNA]</scope>
    <source>
        <strain>cv. Columbia</strain>
    </source>
</reference>
<reference key="2">
    <citation type="journal article" date="2017" name="Plant J.">
        <title>Araport11: a complete reannotation of the Arabidopsis thaliana reference genome.</title>
        <authorList>
            <person name="Cheng C.Y."/>
            <person name="Krishnakumar V."/>
            <person name="Chan A.P."/>
            <person name="Thibaud-Nissen F."/>
            <person name="Schobel S."/>
            <person name="Town C.D."/>
        </authorList>
    </citation>
    <scope>GENOME REANNOTATION</scope>
    <source>
        <strain>cv. Columbia</strain>
    </source>
</reference>
<reference key="3">
    <citation type="journal article" date="2003" name="Science">
        <title>Empirical analysis of transcriptional activity in the Arabidopsis genome.</title>
        <authorList>
            <person name="Yamada K."/>
            <person name="Lim J."/>
            <person name="Dale J.M."/>
            <person name="Chen H."/>
            <person name="Shinn P."/>
            <person name="Palm C.J."/>
            <person name="Southwick A.M."/>
            <person name="Wu H.C."/>
            <person name="Kim C.J."/>
            <person name="Nguyen M."/>
            <person name="Pham P.K."/>
            <person name="Cheuk R.F."/>
            <person name="Karlin-Newmann G."/>
            <person name="Liu S.X."/>
            <person name="Lam B."/>
            <person name="Sakano H."/>
            <person name="Wu T."/>
            <person name="Yu G."/>
            <person name="Miranda M."/>
            <person name="Quach H.L."/>
            <person name="Tripp M."/>
            <person name="Chang C.H."/>
            <person name="Lee J.M."/>
            <person name="Toriumi M.J."/>
            <person name="Chan M.M."/>
            <person name="Tang C.C."/>
            <person name="Onodera C.S."/>
            <person name="Deng J.M."/>
            <person name="Akiyama K."/>
            <person name="Ansari Y."/>
            <person name="Arakawa T."/>
            <person name="Banh J."/>
            <person name="Banno F."/>
            <person name="Bowser L."/>
            <person name="Brooks S.Y."/>
            <person name="Carninci P."/>
            <person name="Chao Q."/>
            <person name="Choy N."/>
            <person name="Enju A."/>
            <person name="Goldsmith A.D."/>
            <person name="Gurjal M."/>
            <person name="Hansen N.F."/>
            <person name="Hayashizaki Y."/>
            <person name="Johnson-Hopson C."/>
            <person name="Hsuan V.W."/>
            <person name="Iida K."/>
            <person name="Karnes M."/>
            <person name="Khan S."/>
            <person name="Koesema E."/>
            <person name="Ishida J."/>
            <person name="Jiang P.X."/>
            <person name="Jones T."/>
            <person name="Kawai J."/>
            <person name="Kamiya A."/>
            <person name="Meyers C."/>
            <person name="Nakajima M."/>
            <person name="Narusaka M."/>
            <person name="Seki M."/>
            <person name="Sakurai T."/>
            <person name="Satou M."/>
            <person name="Tamse R."/>
            <person name="Vaysberg M."/>
            <person name="Wallender E.K."/>
            <person name="Wong C."/>
            <person name="Yamamura Y."/>
            <person name="Yuan S."/>
            <person name="Shinozaki K."/>
            <person name="Davis R.W."/>
            <person name="Theologis A."/>
            <person name="Ecker J.R."/>
        </authorList>
    </citation>
    <scope>NUCLEOTIDE SEQUENCE [LARGE SCALE MRNA]</scope>
    <source>
        <strain>cv. Columbia</strain>
    </source>
</reference>
<reference key="4">
    <citation type="submission" date="2002-03" db="EMBL/GenBank/DDBJ databases">
        <title>Full-length cDNA from Arabidopsis thaliana.</title>
        <authorList>
            <person name="Brover V.V."/>
            <person name="Troukhan M.E."/>
            <person name="Alexandrov N.A."/>
            <person name="Lu Y.-P."/>
            <person name="Flavell R.B."/>
            <person name="Feldmann K.A."/>
        </authorList>
    </citation>
    <scope>NUCLEOTIDE SEQUENCE [LARGE SCALE MRNA]</scope>
</reference>
<reference key="5">
    <citation type="journal article" date="2004" name="Mol. Cell. Proteomics">
        <title>Identification of new intrinsic proteins in Arabidopsis plasma membrane proteome.</title>
        <authorList>
            <person name="Marmagne A."/>
            <person name="Rouet M.-A."/>
            <person name="Ferro M."/>
            <person name="Rolland N."/>
            <person name="Alcon C."/>
            <person name="Joyard J."/>
            <person name="Garin J."/>
            <person name="Barbier-Brygoo H."/>
            <person name="Ephritikhine G."/>
        </authorList>
    </citation>
    <scope>IDENTIFICATION BY MASS SPECTROMETRY</scope>
    <scope>SUBCELLULAR LOCATION [LARGE SCALE ANALYSIS]</scope>
</reference>
<reference key="6">
    <citation type="journal article" date="2009" name="Mol. Cells">
        <title>Pathogen inducible voltage-dependent anion channel (AtVDAC) isoforms are localized to mitochondria membrane in Arabidopsis.</title>
        <authorList>
            <person name="Lee S.M."/>
            <person name="Hoang M.H."/>
            <person name="Han H.J."/>
            <person name="Kim H.S."/>
            <person name="Lee K."/>
            <person name="Kim K.E."/>
            <person name="Kim D.H."/>
            <person name="Lee S.Y."/>
            <person name="Chung W.S."/>
        </authorList>
    </citation>
    <scope>SUBCELLULAR LOCATION</scope>
    <scope>INDUCTION</scope>
</reference>
<reference key="7">
    <citation type="journal article" date="2011" name="J. Exp. Bot.">
        <title>Molecular and genetic characterization of the gene family encoding the voltage-dependent anion channel in Arabidopsis.</title>
        <authorList>
            <person name="Tateda C."/>
            <person name="Watanabe K."/>
            <person name="Kusano T."/>
            <person name="Takahashi Y."/>
        </authorList>
    </citation>
    <scope>FUNCTION</scope>
    <scope>SUBCELLULAR LOCATION</scope>
    <scope>TISSUE SPECIFICITY</scope>
    <scope>GENE FAMILY</scope>
    <scope>DISRUPTION PHENOTYPE</scope>
</reference>
<reference key="8">
    <citation type="journal article" date="2012" name="Mol. Cell. Proteomics">
        <title>Comparative large-scale characterisation of plant vs. mammal proteins reveals similar and idiosyncratic N-alpha acetylation features.</title>
        <authorList>
            <person name="Bienvenut W.V."/>
            <person name="Sumpton D."/>
            <person name="Martinez A."/>
            <person name="Lilla S."/>
            <person name="Espagne C."/>
            <person name="Meinnel T."/>
            <person name="Giglione C."/>
        </authorList>
    </citation>
    <scope>ACETYLATION [LARGE SCALE ANALYSIS] AT GLY-2</scope>
    <scope>CLEAVAGE OF INITIATOR METHIONINE [LARGE SCALE ANALYSIS]</scope>
    <scope>IDENTIFICATION BY MASS SPECTROMETRY [LARGE SCALE ANALYSIS]</scope>
</reference>
<accession>Q9FKM2</accession>
<protein>
    <recommendedName>
        <fullName>Mitochondrial outer membrane protein porin 4</fullName>
    </recommendedName>
    <alternativeName>
        <fullName>Voltage-dependent anion-selective channel protein 4</fullName>
        <shortName>AtVDAC4</shortName>
        <shortName>VDAC-4</shortName>
    </alternativeName>
</protein>
<evidence type="ECO:0000250" key="1"/>
<evidence type="ECO:0000250" key="2">
    <source>
        <dbReference type="UniProtKB" id="Q9SMX3"/>
    </source>
</evidence>
<evidence type="ECO:0000269" key="3">
    <source>
    </source>
</evidence>
<evidence type="ECO:0000269" key="4">
    <source>
    </source>
</evidence>
<evidence type="ECO:0000269" key="5">
    <source>
    </source>
</evidence>
<evidence type="ECO:0000305" key="6"/>
<evidence type="ECO:0007744" key="7">
    <source>
    </source>
</evidence>
<comment type="function">
    <text evidence="1 5">Forms a channel through the mitochondrial outer membrane that allows diffusion of small hydrophilic molecules. The channel adopts an open conformation at low or zero membrane potential and a closed conformation at potentials above 30-40 mV. The open state has a weak anion selectivity whereas the closed state is cation-selective (By similarity). Involved in plant growth and development at the vegetative and reproductive stages. Is important for leaf and pollen development and mitochondrial membrane potential steady state. May be involved in disease resistance.</text>
</comment>
<comment type="subcellular location">
    <subcellularLocation>
        <location evidence="3">Cell membrane</location>
    </subcellularLocation>
    <subcellularLocation>
        <location evidence="4 5">Mitochondrion outer membrane</location>
    </subcellularLocation>
    <text>Also localized in other unidentified cellular compartments.</text>
</comment>
<comment type="tissue specificity">
    <text evidence="5">Widely expressed.</text>
</comment>
<comment type="induction">
    <text evidence="4">By the bacterial pathogen P.syringae pv. tomato.</text>
</comment>
<comment type="domain">
    <text>Consists mainly of membrane-spanning sided beta-sheets.</text>
</comment>
<comment type="disruption phenotype">
    <text evidence="5">Dwarf plants with lesion mimic phenotype and increased expression of the pathogenesis-related genes PR1, PR2 and PR5. Delayed flowering, impaired development of anthers and short siliques with sterile seeds.</text>
</comment>
<comment type="similarity">
    <text evidence="6">Belongs to the eukaryotic mitochondrial porin (TC 1.B.8.1) family.</text>
</comment>
<feature type="initiator methionine" description="Removed" evidence="7">
    <location>
        <position position="1"/>
    </location>
</feature>
<feature type="chain" id="PRO_0000414082" description="Mitochondrial outer membrane protein porin 4">
    <location>
        <begin position="2"/>
        <end position="274"/>
    </location>
</feature>
<feature type="modified residue" description="N-acetylglycine" evidence="7">
    <location>
        <position position="2"/>
    </location>
</feature>
<feature type="modified residue" description="Phosphoserine" evidence="2">
    <location>
        <position position="76"/>
    </location>
</feature>
<organism>
    <name type="scientific">Arabidopsis thaliana</name>
    <name type="common">Mouse-ear cress</name>
    <dbReference type="NCBI Taxonomy" id="3702"/>
    <lineage>
        <taxon>Eukaryota</taxon>
        <taxon>Viridiplantae</taxon>
        <taxon>Streptophyta</taxon>
        <taxon>Embryophyta</taxon>
        <taxon>Tracheophyta</taxon>
        <taxon>Spermatophyta</taxon>
        <taxon>Magnoliopsida</taxon>
        <taxon>eudicotyledons</taxon>
        <taxon>Gunneridae</taxon>
        <taxon>Pentapetalae</taxon>
        <taxon>rosids</taxon>
        <taxon>malvids</taxon>
        <taxon>Brassicales</taxon>
        <taxon>Brassicaceae</taxon>
        <taxon>Camelineae</taxon>
        <taxon>Arabidopsis</taxon>
    </lineage>
</organism>
<keyword id="KW-0007">Acetylation</keyword>
<keyword id="KW-1003">Cell membrane</keyword>
<keyword id="KW-0341">Growth regulation</keyword>
<keyword id="KW-0406">Ion transport</keyword>
<keyword id="KW-0472">Membrane</keyword>
<keyword id="KW-0496">Mitochondrion</keyword>
<keyword id="KW-1000">Mitochondrion outer membrane</keyword>
<keyword id="KW-0597">Phosphoprotein</keyword>
<keyword id="KW-0626">Porin</keyword>
<keyword id="KW-1185">Reference proteome</keyword>
<keyword id="KW-0812">Transmembrane</keyword>
<keyword id="KW-1134">Transmembrane beta strand</keyword>
<keyword id="KW-0813">Transport</keyword>
<dbReference type="EMBL" id="AB011482">
    <property type="protein sequence ID" value="BAB08784.1"/>
    <property type="molecule type" value="Genomic_DNA"/>
</dbReference>
<dbReference type="EMBL" id="CP002688">
    <property type="protein sequence ID" value="AED96907.1"/>
    <property type="molecule type" value="Genomic_DNA"/>
</dbReference>
<dbReference type="EMBL" id="AY034928">
    <property type="protein sequence ID" value="AAK59435.1"/>
    <property type="molecule type" value="mRNA"/>
</dbReference>
<dbReference type="EMBL" id="AY059112">
    <property type="protein sequence ID" value="AAL15218.1"/>
    <property type="molecule type" value="mRNA"/>
</dbReference>
<dbReference type="EMBL" id="AY086306">
    <property type="protein sequence ID" value="AAM64378.1"/>
    <property type="molecule type" value="mRNA"/>
</dbReference>
<dbReference type="RefSeq" id="NP_200557.1">
    <property type="nucleotide sequence ID" value="NM_125130.3"/>
</dbReference>
<dbReference type="SMR" id="Q9FKM2"/>
<dbReference type="FunCoup" id="Q9FKM2">
    <property type="interactions" value="3154"/>
</dbReference>
<dbReference type="STRING" id="3702.Q9FKM2"/>
<dbReference type="iPTMnet" id="Q9FKM2"/>
<dbReference type="SwissPalm" id="Q9FKM2"/>
<dbReference type="PaxDb" id="3702-AT5G57490.1"/>
<dbReference type="ProteomicsDB" id="228583"/>
<dbReference type="DNASU" id="835853"/>
<dbReference type="EnsemblPlants" id="AT5G57490.1">
    <property type="protein sequence ID" value="AT5G57490.1"/>
    <property type="gene ID" value="AT5G57490"/>
</dbReference>
<dbReference type="GeneID" id="835853"/>
<dbReference type="Gramene" id="AT5G57490.1">
    <property type="protein sequence ID" value="AT5G57490.1"/>
    <property type="gene ID" value="AT5G57490"/>
</dbReference>
<dbReference type="KEGG" id="ath:AT5G57490"/>
<dbReference type="Araport" id="AT5G57490"/>
<dbReference type="TAIR" id="AT5G57490">
    <property type="gene designation" value="VDAC4"/>
</dbReference>
<dbReference type="eggNOG" id="KOG3126">
    <property type="taxonomic scope" value="Eukaryota"/>
</dbReference>
<dbReference type="HOGENOM" id="CLU_069937_0_0_1"/>
<dbReference type="InParanoid" id="Q9FKM2"/>
<dbReference type="OMA" id="FKQPAFH"/>
<dbReference type="OrthoDB" id="7827681at2759"/>
<dbReference type="PhylomeDB" id="Q9FKM2"/>
<dbReference type="PRO" id="PR:Q9FKM2"/>
<dbReference type="Proteomes" id="UP000006548">
    <property type="component" value="Chromosome 5"/>
</dbReference>
<dbReference type="ExpressionAtlas" id="Q9FKM2">
    <property type="expression patterns" value="baseline and differential"/>
</dbReference>
<dbReference type="GO" id="GO:0005741">
    <property type="term" value="C:mitochondrial outer membrane"/>
    <property type="evidence" value="ECO:0007669"/>
    <property type="project" value="UniProtKB-SubCell"/>
</dbReference>
<dbReference type="GO" id="GO:0005739">
    <property type="term" value="C:mitochondrion"/>
    <property type="evidence" value="ECO:0000314"/>
    <property type="project" value="TAIR"/>
</dbReference>
<dbReference type="GO" id="GO:0005886">
    <property type="term" value="C:plasma membrane"/>
    <property type="evidence" value="ECO:0007005"/>
    <property type="project" value="TAIR"/>
</dbReference>
<dbReference type="GO" id="GO:0009536">
    <property type="term" value="C:plastid"/>
    <property type="evidence" value="ECO:0007005"/>
    <property type="project" value="TAIR"/>
</dbReference>
<dbReference type="GO" id="GO:0046930">
    <property type="term" value="C:pore complex"/>
    <property type="evidence" value="ECO:0007669"/>
    <property type="project" value="UniProtKB-KW"/>
</dbReference>
<dbReference type="GO" id="GO:0015288">
    <property type="term" value="F:porin activity"/>
    <property type="evidence" value="ECO:0007669"/>
    <property type="project" value="UniProtKB-KW"/>
</dbReference>
<dbReference type="GO" id="GO:0008308">
    <property type="term" value="F:voltage-gated monoatomic anion channel activity"/>
    <property type="evidence" value="ECO:0000315"/>
    <property type="project" value="TAIR"/>
</dbReference>
<dbReference type="GO" id="GO:0009617">
    <property type="term" value="P:response to bacterium"/>
    <property type="evidence" value="ECO:0000270"/>
    <property type="project" value="TAIR"/>
</dbReference>
<dbReference type="CDD" id="cd07306">
    <property type="entry name" value="Porin3_VDAC"/>
    <property type="match status" value="1"/>
</dbReference>
<dbReference type="FunFam" id="2.40.160.10:FF:000003">
    <property type="entry name" value="Outer mitochondrial membrane protein porin"/>
    <property type="match status" value="1"/>
</dbReference>
<dbReference type="Gene3D" id="2.40.160.10">
    <property type="entry name" value="Porin"/>
    <property type="match status" value="1"/>
</dbReference>
<dbReference type="InterPro" id="IPR023614">
    <property type="entry name" value="Porin_dom_sf"/>
</dbReference>
<dbReference type="InterPro" id="IPR001925">
    <property type="entry name" value="Porin_Euk"/>
</dbReference>
<dbReference type="InterPro" id="IPR027246">
    <property type="entry name" value="Porin_Euk/Tom40"/>
</dbReference>
<dbReference type="PANTHER" id="PTHR11743:SF27">
    <property type="entry name" value="MITOCHONDRIAL OUTER MEMBRANE PROTEIN PORIN 4"/>
    <property type="match status" value="1"/>
</dbReference>
<dbReference type="PANTHER" id="PTHR11743">
    <property type="entry name" value="VOLTAGE-DEPENDENT ANION-SELECTIVE CHANNEL"/>
    <property type="match status" value="1"/>
</dbReference>
<dbReference type="Pfam" id="PF01459">
    <property type="entry name" value="Porin_3"/>
    <property type="match status" value="1"/>
</dbReference>
<sequence length="274" mass="29505">MGSSPAPFADIGKKAKDLLNKDYIFDHKFTLTMLSATGTEFVATGLKKDDFFFGDISTLYKGQNTIVDLKIDSHSSVSTKVTLKNLLPSAKAVISFKIPDHKSGKLDVQYVHPHATLNSSIGLNPTPLLDLSATIGSQNVCLGGEVSFDTASSSLTKYNAGIGFNNQGVSAALILEDKGESLRATYVHTVNPTTSFGAELIRRFSNYNNSFTVGSSHSVDQFTVVKTRFSNSGKAGMVVQREWRPKSHITFSAEYDSKAVTSSPKLGLALALKP</sequence>